<evidence type="ECO:0000255" key="1">
    <source>
        <dbReference type="HAMAP-Rule" id="MF_01328"/>
    </source>
</evidence>
<evidence type="ECO:0000256" key="2">
    <source>
        <dbReference type="SAM" id="MobiDB-lite"/>
    </source>
</evidence>
<evidence type="ECO:0000305" key="3"/>
<comment type="function">
    <text evidence="1">One of the primary rRNA binding proteins, this protein initially binds near the 5'-end of the 23S rRNA. It is important during the early stages of 50S assembly. It makes multiple contacts with different domains of the 23S rRNA in the assembled 50S subunit and ribosome.</text>
</comment>
<comment type="function">
    <text evidence="1">Forms part of the polypeptide exit tunnel.</text>
</comment>
<comment type="subunit">
    <text evidence="1">Part of the 50S ribosomal subunit.</text>
</comment>
<comment type="similarity">
    <text evidence="1">Belongs to the universal ribosomal protein uL4 family.</text>
</comment>
<sequence>MDLLIKTLDGNEVGKLKVSESVFGLVPREDILQRVVRWQLARRQQGTHQSQGRSDVSRTGAKMFKQKGTGRARHSSARAPQFRGGGKAHGPVVRSHAHTLPKKIRALGLRFALSAKLKADDLIVVDEFNVKDAKTRMLVSCFSKLGFDNALLIGGNEVDLNFSRATSNIPNIDILPIQGINVYDILRRSKLVLSKAAVEVLEERFK</sequence>
<keyword id="KW-0687">Ribonucleoprotein</keyword>
<keyword id="KW-0689">Ribosomal protein</keyword>
<keyword id="KW-0694">RNA-binding</keyword>
<keyword id="KW-0699">rRNA-binding</keyword>
<name>RL4_BARHE</name>
<gene>
    <name evidence="1" type="primary">rplD</name>
    <name type="ordered locus">BH10500</name>
</gene>
<accession>Q6G2W6</accession>
<dbReference type="EMBL" id="BX897699">
    <property type="protein sequence ID" value="CAF27841.1"/>
    <property type="molecule type" value="Genomic_DNA"/>
</dbReference>
<dbReference type="RefSeq" id="WP_011180913.1">
    <property type="nucleotide sequence ID" value="NZ_LRIJ02000001.1"/>
</dbReference>
<dbReference type="SMR" id="Q6G2W6"/>
<dbReference type="PaxDb" id="283166-BH10500"/>
<dbReference type="EnsemblBacteria" id="CAF27841">
    <property type="protein sequence ID" value="CAF27841"/>
    <property type="gene ID" value="BH10500"/>
</dbReference>
<dbReference type="GeneID" id="92985264"/>
<dbReference type="KEGG" id="bhe:BH10500"/>
<dbReference type="eggNOG" id="COG0088">
    <property type="taxonomic scope" value="Bacteria"/>
</dbReference>
<dbReference type="OrthoDB" id="9803201at2"/>
<dbReference type="Proteomes" id="UP000000421">
    <property type="component" value="Chromosome"/>
</dbReference>
<dbReference type="GO" id="GO:1990904">
    <property type="term" value="C:ribonucleoprotein complex"/>
    <property type="evidence" value="ECO:0007669"/>
    <property type="project" value="UniProtKB-KW"/>
</dbReference>
<dbReference type="GO" id="GO:0005840">
    <property type="term" value="C:ribosome"/>
    <property type="evidence" value="ECO:0007669"/>
    <property type="project" value="UniProtKB-KW"/>
</dbReference>
<dbReference type="GO" id="GO:0019843">
    <property type="term" value="F:rRNA binding"/>
    <property type="evidence" value="ECO:0007669"/>
    <property type="project" value="UniProtKB-UniRule"/>
</dbReference>
<dbReference type="GO" id="GO:0003735">
    <property type="term" value="F:structural constituent of ribosome"/>
    <property type="evidence" value="ECO:0007669"/>
    <property type="project" value="InterPro"/>
</dbReference>
<dbReference type="GO" id="GO:0006412">
    <property type="term" value="P:translation"/>
    <property type="evidence" value="ECO:0007669"/>
    <property type="project" value="UniProtKB-UniRule"/>
</dbReference>
<dbReference type="Gene3D" id="3.40.1370.10">
    <property type="match status" value="1"/>
</dbReference>
<dbReference type="HAMAP" id="MF_01328_B">
    <property type="entry name" value="Ribosomal_uL4_B"/>
    <property type="match status" value="1"/>
</dbReference>
<dbReference type="InterPro" id="IPR002136">
    <property type="entry name" value="Ribosomal_uL4"/>
</dbReference>
<dbReference type="InterPro" id="IPR013005">
    <property type="entry name" value="Ribosomal_uL4-like"/>
</dbReference>
<dbReference type="InterPro" id="IPR023574">
    <property type="entry name" value="Ribosomal_uL4_dom_sf"/>
</dbReference>
<dbReference type="NCBIfam" id="TIGR03953">
    <property type="entry name" value="rplD_bact"/>
    <property type="match status" value="1"/>
</dbReference>
<dbReference type="PANTHER" id="PTHR10746">
    <property type="entry name" value="50S RIBOSOMAL PROTEIN L4"/>
    <property type="match status" value="1"/>
</dbReference>
<dbReference type="PANTHER" id="PTHR10746:SF6">
    <property type="entry name" value="LARGE RIBOSOMAL SUBUNIT PROTEIN UL4M"/>
    <property type="match status" value="1"/>
</dbReference>
<dbReference type="Pfam" id="PF00573">
    <property type="entry name" value="Ribosomal_L4"/>
    <property type="match status" value="1"/>
</dbReference>
<dbReference type="SUPFAM" id="SSF52166">
    <property type="entry name" value="Ribosomal protein L4"/>
    <property type="match status" value="1"/>
</dbReference>
<organism>
    <name type="scientific">Bartonella henselae (strain ATCC 49882 / DSM 28221 / CCUG 30454 / Houston 1)</name>
    <name type="common">Rochalimaea henselae</name>
    <dbReference type="NCBI Taxonomy" id="283166"/>
    <lineage>
        <taxon>Bacteria</taxon>
        <taxon>Pseudomonadati</taxon>
        <taxon>Pseudomonadota</taxon>
        <taxon>Alphaproteobacteria</taxon>
        <taxon>Hyphomicrobiales</taxon>
        <taxon>Bartonellaceae</taxon>
        <taxon>Bartonella</taxon>
    </lineage>
</organism>
<reference key="1">
    <citation type="journal article" date="2004" name="Proc. Natl. Acad. Sci. U.S.A.">
        <title>The louse-borne human pathogen Bartonella quintana is a genomic derivative of the zoonotic agent Bartonella henselae.</title>
        <authorList>
            <person name="Alsmark U.C.M."/>
            <person name="Frank A.C."/>
            <person name="Karlberg E.O."/>
            <person name="Legault B.-A."/>
            <person name="Ardell D.H."/>
            <person name="Canbaeck B."/>
            <person name="Eriksson A.-S."/>
            <person name="Naeslund A.K."/>
            <person name="Handley S.A."/>
            <person name="Huvet M."/>
            <person name="La Scola B."/>
            <person name="Holmberg M."/>
            <person name="Andersson S.G.E."/>
        </authorList>
    </citation>
    <scope>NUCLEOTIDE SEQUENCE [LARGE SCALE GENOMIC DNA]</scope>
    <source>
        <strain>ATCC 49882 / DSM 28221 / CCUG 30454 / Houston 1</strain>
    </source>
</reference>
<feature type="chain" id="PRO_0000242344" description="Large ribosomal subunit protein uL4">
    <location>
        <begin position="1"/>
        <end position="206"/>
    </location>
</feature>
<feature type="region of interest" description="Disordered" evidence="2">
    <location>
        <begin position="42"/>
        <end position="93"/>
    </location>
</feature>
<feature type="compositionally biased region" description="Polar residues" evidence="2">
    <location>
        <begin position="42"/>
        <end position="54"/>
    </location>
</feature>
<feature type="compositionally biased region" description="Basic residues" evidence="2">
    <location>
        <begin position="64"/>
        <end position="76"/>
    </location>
</feature>
<protein>
    <recommendedName>
        <fullName evidence="1">Large ribosomal subunit protein uL4</fullName>
    </recommendedName>
    <alternativeName>
        <fullName evidence="3">50S ribosomal protein L4</fullName>
    </alternativeName>
</protein>
<proteinExistence type="inferred from homology"/>